<reference key="1">
    <citation type="journal article" date="2005" name="Genome Res.">
        <title>Sequence, annotation, and analysis of synteny between rice chromosome 3 and diverged grass species.</title>
        <authorList>
            <consortium name="The rice chromosome 3 sequencing consortium"/>
            <person name="Buell C.R."/>
            <person name="Yuan Q."/>
            <person name="Ouyang S."/>
            <person name="Liu J."/>
            <person name="Zhu W."/>
            <person name="Wang A."/>
            <person name="Maiti R."/>
            <person name="Haas B."/>
            <person name="Wortman J."/>
            <person name="Pertea M."/>
            <person name="Jones K.M."/>
            <person name="Kim M."/>
            <person name="Overton L."/>
            <person name="Tsitrin T."/>
            <person name="Fadrosh D."/>
            <person name="Bera J."/>
            <person name="Weaver B."/>
            <person name="Jin S."/>
            <person name="Johri S."/>
            <person name="Reardon M."/>
            <person name="Webb K."/>
            <person name="Hill J."/>
            <person name="Moffat K."/>
            <person name="Tallon L."/>
            <person name="Van Aken S."/>
            <person name="Lewis M."/>
            <person name="Utterback T."/>
            <person name="Feldblyum T."/>
            <person name="Zismann V."/>
            <person name="Iobst S."/>
            <person name="Hsiao J."/>
            <person name="de Vazeille A.R."/>
            <person name="Salzberg S.L."/>
            <person name="White O."/>
            <person name="Fraser C.M."/>
            <person name="Yu Y."/>
            <person name="Kim H."/>
            <person name="Rambo T."/>
            <person name="Currie J."/>
            <person name="Collura K."/>
            <person name="Kernodle-Thompson S."/>
            <person name="Wei F."/>
            <person name="Kudrna K."/>
            <person name="Ammiraju J.S.S."/>
            <person name="Luo M."/>
            <person name="Goicoechea J.L."/>
            <person name="Wing R.A."/>
            <person name="Henry D."/>
            <person name="Oates R."/>
            <person name="Palmer M."/>
            <person name="Pries G."/>
            <person name="Saski C."/>
            <person name="Simmons J."/>
            <person name="Soderlund C."/>
            <person name="Nelson W."/>
            <person name="de la Bastide M."/>
            <person name="Spiegel L."/>
            <person name="Nascimento L."/>
            <person name="Huang E."/>
            <person name="Preston R."/>
            <person name="Zutavern T."/>
            <person name="Palmer L."/>
            <person name="O'Shaughnessy A."/>
            <person name="Dike S."/>
            <person name="McCombie W.R."/>
            <person name="Minx P."/>
            <person name="Cordum H."/>
            <person name="Wilson R."/>
            <person name="Jin W."/>
            <person name="Lee H.R."/>
            <person name="Jiang J."/>
            <person name="Jackson S."/>
        </authorList>
    </citation>
    <scope>NUCLEOTIDE SEQUENCE [LARGE SCALE GENOMIC DNA]</scope>
    <source>
        <strain>cv. Nipponbare</strain>
    </source>
</reference>
<reference key="2">
    <citation type="journal article" date="2005" name="Nature">
        <title>The map-based sequence of the rice genome.</title>
        <authorList>
            <consortium name="International rice genome sequencing project (IRGSP)"/>
        </authorList>
    </citation>
    <scope>NUCLEOTIDE SEQUENCE [LARGE SCALE GENOMIC DNA]</scope>
    <source>
        <strain>cv. Nipponbare</strain>
    </source>
</reference>
<reference key="3">
    <citation type="journal article" date="2008" name="Nucleic Acids Res.">
        <title>The rice annotation project database (RAP-DB): 2008 update.</title>
        <authorList>
            <consortium name="The rice annotation project (RAP)"/>
        </authorList>
    </citation>
    <scope>GENOME REANNOTATION</scope>
    <source>
        <strain>cv. Nipponbare</strain>
    </source>
</reference>
<reference key="4">
    <citation type="journal article" date="2013" name="Rice">
        <title>Improvement of the Oryza sativa Nipponbare reference genome using next generation sequence and optical map data.</title>
        <authorList>
            <person name="Kawahara Y."/>
            <person name="de la Bastide M."/>
            <person name="Hamilton J.P."/>
            <person name="Kanamori H."/>
            <person name="McCombie W.R."/>
            <person name="Ouyang S."/>
            <person name="Schwartz D.C."/>
            <person name="Tanaka T."/>
            <person name="Wu J."/>
            <person name="Zhou S."/>
            <person name="Childs K.L."/>
            <person name="Davidson R.M."/>
            <person name="Lin H."/>
            <person name="Quesada-Ocampo L."/>
            <person name="Vaillancourt B."/>
            <person name="Sakai H."/>
            <person name="Lee S.S."/>
            <person name="Kim J."/>
            <person name="Numa H."/>
            <person name="Itoh T."/>
            <person name="Buell C.R."/>
            <person name="Matsumoto T."/>
        </authorList>
    </citation>
    <scope>GENOME REANNOTATION</scope>
    <source>
        <strain>cv. Nipponbare</strain>
    </source>
</reference>
<feature type="signal peptide" evidence="2">
    <location>
        <begin position="1"/>
        <end position="29"/>
    </location>
</feature>
<feature type="chain" id="PRO_0000365506" description="Germin-like protein 3-5">
    <location>
        <begin position="30"/>
        <end position="227"/>
    </location>
</feature>
<feature type="domain" description="Cupin type-1" evidence="2">
    <location>
        <begin position="65"/>
        <end position="217"/>
    </location>
</feature>
<feature type="binding site" evidence="1">
    <location>
        <position position="114"/>
    </location>
    <ligand>
        <name>Mn(2+)</name>
        <dbReference type="ChEBI" id="CHEBI:29035"/>
    </ligand>
</feature>
<feature type="binding site" evidence="1">
    <location>
        <position position="116"/>
    </location>
    <ligand>
        <name>Mn(2+)</name>
        <dbReference type="ChEBI" id="CHEBI:29035"/>
    </ligand>
</feature>
<feature type="binding site" evidence="1">
    <location>
        <position position="121"/>
    </location>
    <ligand>
        <name>Mn(2+)</name>
        <dbReference type="ChEBI" id="CHEBI:29035"/>
    </ligand>
</feature>
<feature type="binding site" evidence="1">
    <location>
        <position position="163"/>
    </location>
    <ligand>
        <name>Mn(2+)</name>
        <dbReference type="ChEBI" id="CHEBI:29035"/>
    </ligand>
</feature>
<feature type="glycosylation site" description="N-linked (GlcNAc...) asparagine" evidence="2">
    <location>
        <position position="78"/>
    </location>
</feature>
<feature type="glycosylation site" description="N-linked (GlcNAc...) asparagine" evidence="2">
    <location>
        <position position="81"/>
    </location>
</feature>
<feature type="disulfide bond" evidence="1">
    <location>
        <begin position="36"/>
        <end position="51"/>
    </location>
</feature>
<dbReference type="EMBL" id="AC120508">
    <property type="protein sequence ID" value="AAO38505.1"/>
    <property type="molecule type" value="Genomic_DNA"/>
</dbReference>
<dbReference type="EMBL" id="DP000009">
    <property type="protein sequence ID" value="ABF98326.1"/>
    <property type="molecule type" value="Genomic_DNA"/>
</dbReference>
<dbReference type="EMBL" id="AP008209">
    <property type="protein sequence ID" value="BAF12881.1"/>
    <property type="molecule type" value="Genomic_DNA"/>
</dbReference>
<dbReference type="EMBL" id="AP014959">
    <property type="protein sequence ID" value="BAS85865.1"/>
    <property type="molecule type" value="Genomic_DNA"/>
</dbReference>
<dbReference type="RefSeq" id="XP_015629893.1">
    <property type="nucleotide sequence ID" value="XM_015774407.1"/>
</dbReference>
<dbReference type="SMR" id="Q851K0"/>
<dbReference type="FunCoup" id="Q851K0">
    <property type="interactions" value="44"/>
</dbReference>
<dbReference type="STRING" id="39947.Q851K0"/>
<dbReference type="PaxDb" id="39947-Q851K0"/>
<dbReference type="EnsemblPlants" id="Os03t0693900-01">
    <property type="protein sequence ID" value="Os03t0693900-01"/>
    <property type="gene ID" value="Os03g0693900"/>
</dbReference>
<dbReference type="Gramene" id="Os03t0693900-01">
    <property type="protein sequence ID" value="Os03t0693900-01"/>
    <property type="gene ID" value="Os03g0693900"/>
</dbReference>
<dbReference type="KEGG" id="dosa:Os03g0693900"/>
<dbReference type="eggNOG" id="ENOG502QSRM">
    <property type="taxonomic scope" value="Eukaryota"/>
</dbReference>
<dbReference type="HOGENOM" id="CLU_015790_0_0_1"/>
<dbReference type="InParanoid" id="Q851K0"/>
<dbReference type="OMA" id="MAHISQI"/>
<dbReference type="OrthoDB" id="635918at2759"/>
<dbReference type="Proteomes" id="UP000000763">
    <property type="component" value="Chromosome 3"/>
</dbReference>
<dbReference type="Proteomes" id="UP000059680">
    <property type="component" value="Chromosome 3"/>
</dbReference>
<dbReference type="GO" id="GO:0048046">
    <property type="term" value="C:apoplast"/>
    <property type="evidence" value="ECO:0007669"/>
    <property type="project" value="UniProtKB-SubCell"/>
</dbReference>
<dbReference type="GO" id="GO:0030145">
    <property type="term" value="F:manganese ion binding"/>
    <property type="evidence" value="ECO:0007669"/>
    <property type="project" value="InterPro"/>
</dbReference>
<dbReference type="CDD" id="cd02241">
    <property type="entry name" value="cupin_OxOx"/>
    <property type="match status" value="1"/>
</dbReference>
<dbReference type="FunFam" id="2.60.120.10:FF:000005">
    <property type="entry name" value="Germin-like protein subfamily 1 member 8"/>
    <property type="match status" value="1"/>
</dbReference>
<dbReference type="Gene3D" id="2.60.120.10">
    <property type="entry name" value="Jelly Rolls"/>
    <property type="match status" value="1"/>
</dbReference>
<dbReference type="InterPro" id="IPR006045">
    <property type="entry name" value="Cupin_1"/>
</dbReference>
<dbReference type="InterPro" id="IPR001929">
    <property type="entry name" value="Germin"/>
</dbReference>
<dbReference type="InterPro" id="IPR019780">
    <property type="entry name" value="Germin_Mn-BS"/>
</dbReference>
<dbReference type="InterPro" id="IPR014710">
    <property type="entry name" value="RmlC-like_jellyroll"/>
</dbReference>
<dbReference type="InterPro" id="IPR011051">
    <property type="entry name" value="RmlC_Cupin_sf"/>
</dbReference>
<dbReference type="PANTHER" id="PTHR31238">
    <property type="entry name" value="GERMIN-LIKE PROTEIN SUBFAMILY 3 MEMBER 3"/>
    <property type="match status" value="1"/>
</dbReference>
<dbReference type="Pfam" id="PF00190">
    <property type="entry name" value="Cupin_1"/>
    <property type="match status" value="1"/>
</dbReference>
<dbReference type="PRINTS" id="PR00325">
    <property type="entry name" value="GERMIN"/>
</dbReference>
<dbReference type="SMART" id="SM00835">
    <property type="entry name" value="Cupin_1"/>
    <property type="match status" value="1"/>
</dbReference>
<dbReference type="SUPFAM" id="SSF51182">
    <property type="entry name" value="RmlC-like cupins"/>
    <property type="match status" value="1"/>
</dbReference>
<dbReference type="PROSITE" id="PS00725">
    <property type="entry name" value="GERMIN"/>
    <property type="match status" value="1"/>
</dbReference>
<comment type="function">
    <text>May play a role in plant defense. Probably has no oxalate oxidase activity even if the active site is conserved.</text>
</comment>
<comment type="subunit">
    <text evidence="1">Oligomer (believed to be a pentamer but probably hexamer).</text>
</comment>
<comment type="subcellular location">
    <subcellularLocation>
        <location evidence="1">Secreted</location>
        <location evidence="1">Extracellular space</location>
        <location evidence="1">Apoplast</location>
    </subcellularLocation>
</comment>
<comment type="similarity">
    <text evidence="3">Belongs to the germin family.</text>
</comment>
<evidence type="ECO:0000250" key="1"/>
<evidence type="ECO:0000255" key="2"/>
<evidence type="ECO:0000305" key="3"/>
<name>GL35_ORYSJ</name>
<protein>
    <recommendedName>
        <fullName>Germin-like protein 3-5</fullName>
    </recommendedName>
</protein>
<accession>Q851K0</accession>
<accession>A0A0N7KHV4</accession>
<sequence>MEYGFKAAGLVFVVLLLQQAPVLIRATDADPLQDFCVADLNSEVTVNGHACKPASAAGDEFLFSSKIATGGDVNANPNGSNVTELDVAEWPGVNTLGVSMNRVDFAPGGTNPPHVHPRATEVGIVLRGELLVGIIGTLDTGNRYYSKVVRAGETFVIPRGLMHFQFNVGKTEATMVVSFNSQNPGIVFVPLTLFGSNPPIPTPVLVKALRVDAGVVELLKSKFTGGY</sequence>
<organism>
    <name type="scientific">Oryza sativa subsp. japonica</name>
    <name type="common">Rice</name>
    <dbReference type="NCBI Taxonomy" id="39947"/>
    <lineage>
        <taxon>Eukaryota</taxon>
        <taxon>Viridiplantae</taxon>
        <taxon>Streptophyta</taxon>
        <taxon>Embryophyta</taxon>
        <taxon>Tracheophyta</taxon>
        <taxon>Spermatophyta</taxon>
        <taxon>Magnoliopsida</taxon>
        <taxon>Liliopsida</taxon>
        <taxon>Poales</taxon>
        <taxon>Poaceae</taxon>
        <taxon>BOP clade</taxon>
        <taxon>Oryzoideae</taxon>
        <taxon>Oryzeae</taxon>
        <taxon>Oryzinae</taxon>
        <taxon>Oryza</taxon>
        <taxon>Oryza sativa</taxon>
    </lineage>
</organism>
<gene>
    <name type="ordered locus">Os03g0693900</name>
    <name type="ordered locus">LOC_Os03g48770</name>
    <name type="ORF">OSJNBb0021O11.12</name>
</gene>
<keyword id="KW-0052">Apoplast</keyword>
<keyword id="KW-1015">Disulfide bond</keyword>
<keyword id="KW-0325">Glycoprotein</keyword>
<keyword id="KW-0464">Manganese</keyword>
<keyword id="KW-0479">Metal-binding</keyword>
<keyword id="KW-1185">Reference proteome</keyword>
<keyword id="KW-0964">Secreted</keyword>
<keyword id="KW-0732">Signal</keyword>
<proteinExistence type="evidence at transcript level"/>